<feature type="chain" id="PRO_0000261042" description="Ribose import ATP-binding protein RbsA">
    <location>
        <begin position="1"/>
        <end position="493"/>
    </location>
</feature>
<feature type="domain" description="ABC transporter 1" evidence="1">
    <location>
        <begin position="3"/>
        <end position="239"/>
    </location>
</feature>
<feature type="domain" description="ABC transporter 2" evidence="1">
    <location>
        <begin position="252"/>
        <end position="493"/>
    </location>
</feature>
<feature type="binding site" evidence="1">
    <location>
        <begin position="35"/>
        <end position="42"/>
    </location>
    <ligand>
        <name>ATP</name>
        <dbReference type="ChEBI" id="CHEBI:30616"/>
    </ligand>
</feature>
<sequence>MHIKMKDIFKAFGQNQVLSGVSFELQEGEVHALMGENGAGKSTLMNLLTGLHKLDSGTIEIDGKETYFSDPKEAEQNGIAFIHQELNIWPEMTVLENLFIGRELSSKLGFLNNKKMKALAKEQLERLGVSISLEKEAGDCSVGQQQMIEIAKALMTDAKVIIMDEPTAALTEREIEKLFGVIRALKKNGVSIVYISHRMEEIFTICDRITVMRDGKTVDTKRIPDTDFHEVVKKMVGRELTERYPERQPNPGRVVLEVKQASKKGVFQNISFSVRSGEIVGISGLMGAGRTELMRAVFGLDPLDSGDIFIEGKKAALKKPSDAVQKGIGFITENRKDEGLVLDTSIRENIALPNLASFSPKGWIDKKSEQEFVDLLIKRLTIKTESPETHARNLSGGNQQKVVIAKWIGIGPKVLILDEPTRGVDVGAKREIYQLMNELTDRGVAIVMVSSELPEILGMSDRVLVIHEGTLSGELSRNDATQERIMTLATGGR</sequence>
<proteinExistence type="inferred from homology"/>
<evidence type="ECO:0000255" key="1">
    <source>
        <dbReference type="HAMAP-Rule" id="MF_01716"/>
    </source>
</evidence>
<gene>
    <name evidence="1" type="primary">rbsA</name>
    <name type="ordered locus">BLi03843</name>
    <name type="ordered locus">BL02441</name>
</gene>
<comment type="function">
    <text evidence="1">Part of the ABC transporter complex RbsABC involved in ribose import. Responsible for energy coupling to the transport system.</text>
</comment>
<comment type="catalytic activity">
    <reaction evidence="1">
        <text>D-ribose(out) + ATP + H2O = D-ribose(in) + ADP + phosphate + H(+)</text>
        <dbReference type="Rhea" id="RHEA:29903"/>
        <dbReference type="ChEBI" id="CHEBI:15377"/>
        <dbReference type="ChEBI" id="CHEBI:15378"/>
        <dbReference type="ChEBI" id="CHEBI:30616"/>
        <dbReference type="ChEBI" id="CHEBI:43474"/>
        <dbReference type="ChEBI" id="CHEBI:47013"/>
        <dbReference type="ChEBI" id="CHEBI:456216"/>
        <dbReference type="EC" id="7.5.2.7"/>
    </reaction>
</comment>
<comment type="subunit">
    <text evidence="1">The complex is composed of an ATP-binding protein (RbsA), two transmembrane proteins (RbsC) and a solute-binding protein (RbsB).</text>
</comment>
<comment type="subcellular location">
    <subcellularLocation>
        <location evidence="1">Cell membrane</location>
        <topology evidence="1">Peripheral membrane protein</topology>
    </subcellularLocation>
</comment>
<comment type="similarity">
    <text evidence="1">Belongs to the ABC transporter superfamily. Ribose importer (TC 3.A.1.2.1) family.</text>
</comment>
<accession>Q65E55</accession>
<accession>Q62PM5</accession>
<keyword id="KW-0067">ATP-binding</keyword>
<keyword id="KW-1003">Cell membrane</keyword>
<keyword id="KW-0472">Membrane</keyword>
<keyword id="KW-0547">Nucleotide-binding</keyword>
<keyword id="KW-1185">Reference proteome</keyword>
<keyword id="KW-0677">Repeat</keyword>
<keyword id="KW-0762">Sugar transport</keyword>
<keyword id="KW-1278">Translocase</keyword>
<keyword id="KW-0813">Transport</keyword>
<organism>
    <name type="scientific">Bacillus licheniformis (strain ATCC 14580 / DSM 13 / JCM 2505 / CCUG 7422 / NBRC 12200 / NCIMB 9375 / NCTC 10341 / NRRL NRS-1264 / Gibson 46)</name>
    <dbReference type="NCBI Taxonomy" id="279010"/>
    <lineage>
        <taxon>Bacteria</taxon>
        <taxon>Bacillati</taxon>
        <taxon>Bacillota</taxon>
        <taxon>Bacilli</taxon>
        <taxon>Bacillales</taxon>
        <taxon>Bacillaceae</taxon>
        <taxon>Bacillus</taxon>
    </lineage>
</organism>
<name>RBSA_BACLD</name>
<protein>
    <recommendedName>
        <fullName evidence="1">Ribose import ATP-binding protein RbsA</fullName>
        <ecNumber evidence="1">7.5.2.7</ecNumber>
    </recommendedName>
</protein>
<reference key="1">
    <citation type="journal article" date="2004" name="J. Mol. Microbiol. Biotechnol.">
        <title>The complete genome sequence of Bacillus licheniformis DSM13, an organism with great industrial potential.</title>
        <authorList>
            <person name="Veith B."/>
            <person name="Herzberg C."/>
            <person name="Steckel S."/>
            <person name="Feesche J."/>
            <person name="Maurer K.H."/>
            <person name="Ehrenreich P."/>
            <person name="Baeumer S."/>
            <person name="Henne A."/>
            <person name="Liesegang H."/>
            <person name="Merkl R."/>
            <person name="Ehrenreich A."/>
            <person name="Gottschalk G."/>
        </authorList>
    </citation>
    <scope>NUCLEOTIDE SEQUENCE [LARGE SCALE GENOMIC DNA]</scope>
    <source>
        <strain>ATCC 14580 / DSM 13 / JCM 2505 / CCUG 7422 / NBRC 12200 / NCIMB 9375 / NCTC 10341 / NRRL NRS-1264 / Gibson 46</strain>
    </source>
</reference>
<reference key="2">
    <citation type="journal article" date="2004" name="Genome Biol.">
        <title>Complete genome sequence of the industrial bacterium Bacillus licheniformis and comparisons with closely related Bacillus species.</title>
        <authorList>
            <person name="Rey M.W."/>
            <person name="Ramaiya P."/>
            <person name="Nelson B.A."/>
            <person name="Brody-Karpin S.D."/>
            <person name="Zaretsky E.J."/>
            <person name="Tang M."/>
            <person name="Lopez de Leon A."/>
            <person name="Xiang H."/>
            <person name="Gusti V."/>
            <person name="Clausen I.G."/>
            <person name="Olsen P.B."/>
            <person name="Rasmussen M.D."/>
            <person name="Andersen J.T."/>
            <person name="Joergensen P.L."/>
            <person name="Larsen T.S."/>
            <person name="Sorokin A."/>
            <person name="Bolotin A."/>
            <person name="Lapidus A."/>
            <person name="Galleron N."/>
            <person name="Ehrlich S.D."/>
            <person name="Berka R.M."/>
        </authorList>
    </citation>
    <scope>NUCLEOTIDE SEQUENCE [LARGE SCALE GENOMIC DNA]</scope>
    <source>
        <strain>ATCC 14580 / DSM 13 / JCM 2505 / CCUG 7422 / NBRC 12200 / NCIMB 9375 / NCTC 10341 / NRRL NRS-1264 / Gibson 46</strain>
    </source>
</reference>
<dbReference type="EC" id="7.5.2.7" evidence="1"/>
<dbReference type="EMBL" id="AE017333">
    <property type="protein sequence ID" value="AAU42659.1"/>
    <property type="molecule type" value="Genomic_DNA"/>
</dbReference>
<dbReference type="EMBL" id="CP000002">
    <property type="protein sequence ID" value="AAU25286.1"/>
    <property type="molecule type" value="Genomic_DNA"/>
</dbReference>
<dbReference type="RefSeq" id="WP_009329702.1">
    <property type="nucleotide sequence ID" value="NC_006322.1"/>
</dbReference>
<dbReference type="SMR" id="Q65E55"/>
<dbReference type="STRING" id="279010.BL02441"/>
<dbReference type="KEGG" id="bld:BLi03843"/>
<dbReference type="KEGG" id="bli:BL02441"/>
<dbReference type="eggNOG" id="COG1129">
    <property type="taxonomic scope" value="Bacteria"/>
</dbReference>
<dbReference type="HOGENOM" id="CLU_000604_92_3_9"/>
<dbReference type="Proteomes" id="UP000000606">
    <property type="component" value="Chromosome"/>
</dbReference>
<dbReference type="GO" id="GO:0005886">
    <property type="term" value="C:plasma membrane"/>
    <property type="evidence" value="ECO:0007669"/>
    <property type="project" value="UniProtKB-SubCell"/>
</dbReference>
<dbReference type="GO" id="GO:0015611">
    <property type="term" value="F:ABC-type D-ribose transporter activity"/>
    <property type="evidence" value="ECO:0007669"/>
    <property type="project" value="UniProtKB-EC"/>
</dbReference>
<dbReference type="GO" id="GO:0005524">
    <property type="term" value="F:ATP binding"/>
    <property type="evidence" value="ECO:0007669"/>
    <property type="project" value="UniProtKB-KW"/>
</dbReference>
<dbReference type="GO" id="GO:0016887">
    <property type="term" value="F:ATP hydrolysis activity"/>
    <property type="evidence" value="ECO:0007669"/>
    <property type="project" value="InterPro"/>
</dbReference>
<dbReference type="CDD" id="cd03216">
    <property type="entry name" value="ABC_Carb_Monos_I"/>
    <property type="match status" value="1"/>
</dbReference>
<dbReference type="CDD" id="cd03215">
    <property type="entry name" value="ABC_Carb_Monos_II"/>
    <property type="match status" value="1"/>
</dbReference>
<dbReference type="FunFam" id="3.40.50.300:FF:000126">
    <property type="entry name" value="Galactose/methyl galactoside import ATP-binding protein MglA"/>
    <property type="match status" value="1"/>
</dbReference>
<dbReference type="FunFam" id="3.40.50.300:FF:000127">
    <property type="entry name" value="Ribose import ATP-binding protein RbsA"/>
    <property type="match status" value="1"/>
</dbReference>
<dbReference type="Gene3D" id="3.40.50.300">
    <property type="entry name" value="P-loop containing nucleotide triphosphate hydrolases"/>
    <property type="match status" value="2"/>
</dbReference>
<dbReference type="InterPro" id="IPR003593">
    <property type="entry name" value="AAA+_ATPase"/>
</dbReference>
<dbReference type="InterPro" id="IPR050107">
    <property type="entry name" value="ABC_carbohydrate_import_ATPase"/>
</dbReference>
<dbReference type="InterPro" id="IPR003439">
    <property type="entry name" value="ABC_transporter-like_ATP-bd"/>
</dbReference>
<dbReference type="InterPro" id="IPR017871">
    <property type="entry name" value="ABC_transporter-like_CS"/>
</dbReference>
<dbReference type="InterPro" id="IPR027417">
    <property type="entry name" value="P-loop_NTPase"/>
</dbReference>
<dbReference type="PANTHER" id="PTHR43790">
    <property type="entry name" value="CARBOHYDRATE TRANSPORT ATP-BINDING PROTEIN MG119-RELATED"/>
    <property type="match status" value="1"/>
</dbReference>
<dbReference type="PANTHER" id="PTHR43790:SF3">
    <property type="entry name" value="D-ALLOSE IMPORT ATP-BINDING PROTEIN ALSA-RELATED"/>
    <property type="match status" value="1"/>
</dbReference>
<dbReference type="Pfam" id="PF00005">
    <property type="entry name" value="ABC_tran"/>
    <property type="match status" value="2"/>
</dbReference>
<dbReference type="SMART" id="SM00382">
    <property type="entry name" value="AAA"/>
    <property type="match status" value="2"/>
</dbReference>
<dbReference type="SUPFAM" id="SSF52540">
    <property type="entry name" value="P-loop containing nucleoside triphosphate hydrolases"/>
    <property type="match status" value="2"/>
</dbReference>
<dbReference type="PROSITE" id="PS00211">
    <property type="entry name" value="ABC_TRANSPORTER_1"/>
    <property type="match status" value="2"/>
</dbReference>
<dbReference type="PROSITE" id="PS50893">
    <property type="entry name" value="ABC_TRANSPORTER_2"/>
    <property type="match status" value="2"/>
</dbReference>
<dbReference type="PROSITE" id="PS51254">
    <property type="entry name" value="RBSA"/>
    <property type="match status" value="1"/>
</dbReference>